<organism>
    <name type="scientific">Micrurus altirostris</name>
    <name type="common">Uruguayan coral snake</name>
    <name type="synonym">Elaps altirostris</name>
    <dbReference type="NCBI Taxonomy" id="129457"/>
    <lineage>
        <taxon>Eukaryota</taxon>
        <taxon>Metazoa</taxon>
        <taxon>Chordata</taxon>
        <taxon>Craniata</taxon>
        <taxon>Vertebrata</taxon>
        <taxon>Euteleostomi</taxon>
        <taxon>Lepidosauria</taxon>
        <taxon>Squamata</taxon>
        <taxon>Bifurcata</taxon>
        <taxon>Unidentata</taxon>
        <taxon>Episquamata</taxon>
        <taxon>Toxicofera</taxon>
        <taxon>Serpentes</taxon>
        <taxon>Colubroidea</taxon>
        <taxon>Elapidae</taxon>
        <taxon>Elapinae</taxon>
        <taxon>Micrurus</taxon>
    </lineage>
</organism>
<protein>
    <recommendedName>
        <fullName evidence="5">Three-finger toxin MALT0044C</fullName>
        <shortName evidence="3">3FTx MALT0044C</shortName>
    </recommendedName>
</protein>
<comment type="subcellular location">
    <subcellularLocation>
        <location evidence="2">Secreted</location>
    </subcellularLocation>
</comment>
<comment type="tissue specificity">
    <text evidence="4">Expressed by the venom gland.</text>
</comment>
<comment type="mass spectrometry" mass="7149.3" method="Electrospray" evidence="2">
    <text>Average mass.</text>
</comment>
<comment type="similarity">
    <text evidence="3">Belongs to the three-finger toxin family. Short-chain subfamily.</text>
</comment>
<dbReference type="EMBL" id="JF754471">
    <property type="protein sequence ID" value="AED89560.1"/>
    <property type="molecule type" value="mRNA"/>
</dbReference>
<dbReference type="SMR" id="F5CPD3"/>
<dbReference type="GO" id="GO:0005576">
    <property type="term" value="C:extracellular region"/>
    <property type="evidence" value="ECO:0007669"/>
    <property type="project" value="UniProtKB-SubCell"/>
</dbReference>
<dbReference type="GO" id="GO:0090729">
    <property type="term" value="F:toxin activity"/>
    <property type="evidence" value="ECO:0007669"/>
    <property type="project" value="UniProtKB-KW"/>
</dbReference>
<dbReference type="CDD" id="cd00206">
    <property type="entry name" value="TFP_snake_toxin"/>
    <property type="match status" value="1"/>
</dbReference>
<dbReference type="Gene3D" id="2.10.60.10">
    <property type="entry name" value="CD59"/>
    <property type="match status" value="1"/>
</dbReference>
<dbReference type="InterPro" id="IPR003571">
    <property type="entry name" value="Snake_3FTx"/>
</dbReference>
<dbReference type="InterPro" id="IPR045860">
    <property type="entry name" value="Snake_toxin-like_sf"/>
</dbReference>
<dbReference type="InterPro" id="IPR018354">
    <property type="entry name" value="Snake_toxin_con_site"/>
</dbReference>
<dbReference type="InterPro" id="IPR054131">
    <property type="entry name" value="Toxin_cobra-type"/>
</dbReference>
<dbReference type="Pfam" id="PF21947">
    <property type="entry name" value="Toxin_cobra-type"/>
    <property type="match status" value="1"/>
</dbReference>
<dbReference type="SUPFAM" id="SSF57302">
    <property type="entry name" value="Snake toxin-like"/>
    <property type="match status" value="1"/>
</dbReference>
<dbReference type="PROSITE" id="PS00272">
    <property type="entry name" value="SNAKE_TOXIN"/>
    <property type="match status" value="1"/>
</dbReference>
<sequence length="85" mass="9398">MKTLLLTLVVVTIVCLDLGNTRICDDSNIPSERTPKRCQGGYNICYKINFPTPGYELLQIKGCAARCPTNPRFPKAECCATDNCI</sequence>
<evidence type="ECO:0000250" key="1">
    <source>
        <dbReference type="UniProtKB" id="P60301"/>
    </source>
</evidence>
<evidence type="ECO:0000269" key="2">
    <source>
    </source>
</evidence>
<evidence type="ECO:0000305" key="3"/>
<evidence type="ECO:0000305" key="4">
    <source>
    </source>
</evidence>
<evidence type="ECO:0000312" key="5">
    <source>
        <dbReference type="EMBL" id="AED89560.1"/>
    </source>
</evidence>
<name>3SX4_MICAT</name>
<keyword id="KW-0903">Direct protein sequencing</keyword>
<keyword id="KW-1015">Disulfide bond</keyword>
<keyword id="KW-0964">Secreted</keyword>
<keyword id="KW-0732">Signal</keyword>
<keyword id="KW-0800">Toxin</keyword>
<feature type="signal peptide" evidence="2">
    <location>
        <begin position="1"/>
        <end position="21"/>
    </location>
</feature>
<feature type="chain" id="PRO_0000422895" description="Three-finger toxin MALT0044C" evidence="4">
    <location>
        <begin position="22"/>
        <end position="85"/>
    </location>
</feature>
<feature type="disulfide bond" evidence="1">
    <location>
        <begin position="24"/>
        <end position="45"/>
    </location>
</feature>
<feature type="disulfide bond" evidence="1">
    <location>
        <begin position="38"/>
        <end position="63"/>
    </location>
</feature>
<feature type="disulfide bond" evidence="1">
    <location>
        <begin position="67"/>
        <end position="78"/>
    </location>
</feature>
<feature type="disulfide bond" evidence="1">
    <location>
        <begin position="79"/>
        <end position="84"/>
    </location>
</feature>
<accession>F5CPD3</accession>
<reference key="1">
    <citation type="journal article" date="2011" name="J. Proteomics">
        <title>Snake venomics and venom gland transcriptomic analysis of Brazilian coral snakes, Micrurus altirostris and M. corallinus.</title>
        <authorList>
            <person name="Correa-Netto C."/>
            <person name="Junqueira-de-Azevedo Ide L."/>
            <person name="Silva D.A."/>
            <person name="Ho P.L."/>
            <person name="Leitao-de-Araujo M."/>
            <person name="Alves M.L."/>
            <person name="Sanz L."/>
            <person name="Foguel D."/>
            <person name="Zingali R.B."/>
            <person name="Calvete J.J."/>
        </authorList>
    </citation>
    <scope>NUCLEOTIDE SEQUENCE [MRNA]</scope>
    <scope>PROTEIN SEQUENCE OF 22-36</scope>
    <scope>MASS SPECTROMETRY</scope>
    <scope>IDENTIFICATION BY MASS SPECTROMETRY</scope>
    <scope>SUBCELLULAR LOCATION</scope>
    <source>
        <tissue>Venom</tissue>
        <tissue>Venom gland</tissue>
    </source>
</reference>
<proteinExistence type="evidence at protein level"/>